<dbReference type="EC" id="1.18.6.1"/>
<dbReference type="EMBL" id="M15238">
    <property type="protein sequence ID" value="AAA27374.1"/>
    <property type="status" value="ALT_INIT"/>
    <property type="molecule type" value="Genomic_DNA"/>
</dbReference>
<dbReference type="PIR" id="A26931">
    <property type="entry name" value="A26931"/>
</dbReference>
<dbReference type="SMR" id="P06661"/>
<dbReference type="GO" id="GO:0051539">
    <property type="term" value="F:4 iron, 4 sulfur cluster binding"/>
    <property type="evidence" value="ECO:0007669"/>
    <property type="project" value="UniProtKB-KW"/>
</dbReference>
<dbReference type="GO" id="GO:0005524">
    <property type="term" value="F:ATP binding"/>
    <property type="evidence" value="ECO:0007669"/>
    <property type="project" value="UniProtKB-UniRule"/>
</dbReference>
<dbReference type="GO" id="GO:0046872">
    <property type="term" value="F:metal ion binding"/>
    <property type="evidence" value="ECO:0007669"/>
    <property type="project" value="UniProtKB-KW"/>
</dbReference>
<dbReference type="GO" id="GO:0016163">
    <property type="term" value="F:nitrogenase activity"/>
    <property type="evidence" value="ECO:0007669"/>
    <property type="project" value="UniProtKB-UniRule"/>
</dbReference>
<dbReference type="GO" id="GO:0009399">
    <property type="term" value="P:nitrogen fixation"/>
    <property type="evidence" value="ECO:0007669"/>
    <property type="project" value="UniProtKB-UniRule"/>
</dbReference>
<dbReference type="CDD" id="cd02040">
    <property type="entry name" value="NifH"/>
    <property type="match status" value="1"/>
</dbReference>
<dbReference type="FunFam" id="3.40.50.300:FF:001379">
    <property type="entry name" value="Nitrogenase iron protein 1"/>
    <property type="match status" value="1"/>
</dbReference>
<dbReference type="Gene3D" id="3.40.50.300">
    <property type="entry name" value="P-loop containing nucleotide triphosphate hydrolases"/>
    <property type="match status" value="1"/>
</dbReference>
<dbReference type="HAMAP" id="MF_00533">
    <property type="entry name" value="NifH"/>
    <property type="match status" value="1"/>
</dbReference>
<dbReference type="InterPro" id="IPR030655">
    <property type="entry name" value="NifH/chlL_CS"/>
</dbReference>
<dbReference type="InterPro" id="IPR000392">
    <property type="entry name" value="NifH/frxC"/>
</dbReference>
<dbReference type="InterPro" id="IPR005977">
    <property type="entry name" value="Nitrogenase_Fe_NifH"/>
</dbReference>
<dbReference type="InterPro" id="IPR027417">
    <property type="entry name" value="P-loop_NTPase"/>
</dbReference>
<dbReference type="NCBIfam" id="TIGR01287">
    <property type="entry name" value="nifH"/>
    <property type="match status" value="1"/>
</dbReference>
<dbReference type="PANTHER" id="PTHR42864">
    <property type="entry name" value="LIGHT-INDEPENDENT PROTOCHLOROPHYLLIDE REDUCTASE IRON-SULFUR ATP-BINDING PROTEIN"/>
    <property type="match status" value="1"/>
</dbReference>
<dbReference type="PANTHER" id="PTHR42864:SF2">
    <property type="entry name" value="LIGHT-INDEPENDENT PROTOCHLOROPHYLLIDE REDUCTASE IRON-SULFUR ATP-BINDING PROTEIN"/>
    <property type="match status" value="1"/>
</dbReference>
<dbReference type="Pfam" id="PF00142">
    <property type="entry name" value="Fer4_NifH"/>
    <property type="match status" value="1"/>
</dbReference>
<dbReference type="PIRSF" id="PIRSF000363">
    <property type="entry name" value="Nitrogenase_iron"/>
    <property type="match status" value="1"/>
</dbReference>
<dbReference type="PRINTS" id="PR00091">
    <property type="entry name" value="NITROGNASEII"/>
</dbReference>
<dbReference type="SUPFAM" id="SSF52540">
    <property type="entry name" value="P-loop containing nucleoside triphosphate hydrolases"/>
    <property type="match status" value="1"/>
</dbReference>
<dbReference type="PROSITE" id="PS00746">
    <property type="entry name" value="NIFH_FRXC_1"/>
    <property type="match status" value="1"/>
</dbReference>
<dbReference type="PROSITE" id="PS00692">
    <property type="entry name" value="NIFH_FRXC_2"/>
    <property type="match status" value="1"/>
</dbReference>
<dbReference type="PROSITE" id="PS51026">
    <property type="entry name" value="NIFH_FRXC_3"/>
    <property type="match status" value="1"/>
</dbReference>
<organism>
    <name type="scientific">Acidithiobacillus ferrooxidans</name>
    <name type="common">Thiobacillus ferrooxidans</name>
    <dbReference type="NCBI Taxonomy" id="920"/>
    <lineage>
        <taxon>Bacteria</taxon>
        <taxon>Pseudomonadati</taxon>
        <taxon>Pseudomonadota</taxon>
        <taxon>Acidithiobacillia</taxon>
        <taxon>Acidithiobacillales</taxon>
        <taxon>Acidithiobacillaceae</taxon>
        <taxon>Acidithiobacillus</taxon>
    </lineage>
</organism>
<proteinExistence type="inferred from homology"/>
<name>NIFH_ACIFR</name>
<keyword id="KW-0004">4Fe-4S</keyword>
<keyword id="KW-0013">ADP-ribosylation</keyword>
<keyword id="KW-0067">ATP-binding</keyword>
<keyword id="KW-0408">Iron</keyword>
<keyword id="KW-0411">Iron-sulfur</keyword>
<keyword id="KW-0479">Metal-binding</keyword>
<keyword id="KW-0535">Nitrogen fixation</keyword>
<keyword id="KW-0547">Nucleotide-binding</keyword>
<keyword id="KW-0560">Oxidoreductase</keyword>
<gene>
    <name type="primary">nifH</name>
</gene>
<protein>
    <recommendedName>
        <fullName>Nitrogenase iron protein</fullName>
        <ecNumber>1.18.6.1</ecNumber>
    </recommendedName>
    <alternativeName>
        <fullName>Nitrogenase Fe protein</fullName>
    </alternativeName>
    <alternativeName>
        <fullName>Nitrogenase component II</fullName>
    </alternativeName>
    <alternativeName>
        <fullName>Nitrogenase reductase</fullName>
    </alternativeName>
</protein>
<feature type="chain" id="PRO_0000139532" description="Nitrogenase iron protein">
    <location>
        <begin position="1"/>
        <end position="296"/>
    </location>
</feature>
<feature type="binding site" evidence="2">
    <location>
        <begin position="12"/>
        <end position="19"/>
    </location>
    <ligand>
        <name>ATP</name>
        <dbReference type="ChEBI" id="CHEBI:30616"/>
    </ligand>
</feature>
<feature type="binding site" evidence="1">
    <location>
        <position position="100"/>
    </location>
    <ligand>
        <name>[4Fe-4S] cluster</name>
        <dbReference type="ChEBI" id="CHEBI:49883"/>
        <note>ligand shared between dimeric partners</note>
    </ligand>
</feature>
<feature type="binding site" evidence="1">
    <location>
        <position position="134"/>
    </location>
    <ligand>
        <name>[4Fe-4S] cluster</name>
        <dbReference type="ChEBI" id="CHEBI:49883"/>
        <note>ligand shared between dimeric partners</note>
    </ligand>
</feature>
<feature type="modified residue" description="ADP-ribosylarginine; by dinitrogenase reductase ADP-ribosyltransferase" evidence="1">
    <location>
        <position position="103"/>
    </location>
</feature>
<reference key="1">
    <citation type="journal article" date="1987" name="J. Bacteriol.">
        <title>Nucleotide sequence of the gene encoding the nitrogenase iron protein of Thiobacillus ferrooxidans.</title>
        <authorList>
            <person name="Pretorius I.-M."/>
            <person name="Rawlings D.E."/>
            <person name="O'Neill E.G."/>
            <person name="Jones W.A."/>
            <person name="Kirby R."/>
            <person name="Woods D.R."/>
        </authorList>
    </citation>
    <scope>NUCLEOTIDE SEQUENCE [GENOMIC DNA]</scope>
</reference>
<accession>P06661</accession>
<evidence type="ECO:0000250" key="1"/>
<evidence type="ECO:0000255" key="2"/>
<evidence type="ECO:0000305" key="3"/>
<sequence length="296" mass="31823">MSDKLRQIAFYGKGGIGKSTTSQKHLAALAEMGQKILIVGCDPKADSTRLILHSKAQDTVLSLAAEAGSVEDLELEDVMKVGYRDIRCVESGGPEPGVGCAGRGVITSINFLEENGAYDGANYVSYDVLGDVVCGGFAMPIRKQAQEIYIVMSGEMMAMYAANNISKGVLKYANSGGVRLGGLICNERQTDKELELAEALAGKLGTKLIHFVPRDFIVQHAELRRMTVLEYAPESKQAQEYRTLAEKIHANAGNPAIPTPITMDELEDLLMDFGIMQKEDTSIIGKTAAELAAAGM</sequence>
<comment type="function">
    <text evidence="1">The key enzymatic reactions in nitrogen fixation are catalyzed by the nitrogenase complex, which has 2 components: the iron protein and the molybdenum-iron protein.</text>
</comment>
<comment type="catalytic activity">
    <reaction>
        <text>N2 + 8 reduced [2Fe-2S]-[ferredoxin] + 16 ATP + 16 H2O = H2 + 8 oxidized [2Fe-2S]-[ferredoxin] + 2 NH4(+) + 16 ADP + 16 phosphate + 6 H(+)</text>
        <dbReference type="Rhea" id="RHEA:21448"/>
        <dbReference type="Rhea" id="RHEA-COMP:10000"/>
        <dbReference type="Rhea" id="RHEA-COMP:10001"/>
        <dbReference type="ChEBI" id="CHEBI:15377"/>
        <dbReference type="ChEBI" id="CHEBI:15378"/>
        <dbReference type="ChEBI" id="CHEBI:17997"/>
        <dbReference type="ChEBI" id="CHEBI:18276"/>
        <dbReference type="ChEBI" id="CHEBI:28938"/>
        <dbReference type="ChEBI" id="CHEBI:30616"/>
        <dbReference type="ChEBI" id="CHEBI:33737"/>
        <dbReference type="ChEBI" id="CHEBI:33738"/>
        <dbReference type="ChEBI" id="CHEBI:43474"/>
        <dbReference type="ChEBI" id="CHEBI:456216"/>
        <dbReference type="EC" id="1.18.6.1"/>
    </reaction>
</comment>
<comment type="cofactor">
    <cofactor evidence="1">
        <name>[4Fe-4S] cluster</name>
        <dbReference type="ChEBI" id="CHEBI:49883"/>
    </cofactor>
    <text evidence="1">Binds 1 [4Fe-4S] cluster per dimer.</text>
</comment>
<comment type="subunit">
    <text evidence="1">Homodimer.</text>
</comment>
<comment type="PTM">
    <text evidence="1">The reversible ADP-ribosylation of Arg-103 inactivates the nitrogenase reductase and regulates nitrogenase activity.</text>
</comment>
<comment type="similarity">
    <text evidence="3">Belongs to the NifH/BchL/ChlL family.</text>
</comment>
<comment type="sequence caution" evidence="3">
    <conflict type="erroneous initiation">
        <sequence resource="EMBL-CDS" id="AAA27374"/>
    </conflict>
</comment>